<dbReference type="EC" id="2.8.1.7" evidence="1"/>
<dbReference type="EMBL" id="CP000727">
    <property type="protein sequence ID" value="ABS37989.1"/>
    <property type="molecule type" value="Genomic_DNA"/>
</dbReference>
<dbReference type="EMBL" id="AM412317">
    <property type="protein sequence ID" value="CAL84126.1"/>
    <property type="molecule type" value="Genomic_DNA"/>
</dbReference>
<dbReference type="RefSeq" id="YP_001255064.1">
    <property type="nucleotide sequence ID" value="NC_009495.1"/>
</dbReference>
<dbReference type="RefSeq" id="YP_001388281.1">
    <property type="nucleotide sequence ID" value="NC_009698.1"/>
</dbReference>
<dbReference type="SMR" id="A5I4Z9"/>
<dbReference type="GeneID" id="5187118"/>
<dbReference type="KEGG" id="cbh:CLC_2440"/>
<dbReference type="KEGG" id="cbo:CBO2568"/>
<dbReference type="PATRIC" id="fig|413999.7.peg.2547"/>
<dbReference type="HOGENOM" id="CLU_003433_0_0_9"/>
<dbReference type="UniPathway" id="UPA00266"/>
<dbReference type="PRO" id="PR:A5I4Z9"/>
<dbReference type="Proteomes" id="UP000001986">
    <property type="component" value="Chromosome"/>
</dbReference>
<dbReference type="GO" id="GO:1990221">
    <property type="term" value="C:L-cysteine desulfurase complex"/>
    <property type="evidence" value="ECO:0007669"/>
    <property type="project" value="UniProtKB-ARBA"/>
</dbReference>
<dbReference type="GO" id="GO:0051537">
    <property type="term" value="F:2 iron, 2 sulfur cluster binding"/>
    <property type="evidence" value="ECO:0007669"/>
    <property type="project" value="UniProtKB-UniRule"/>
</dbReference>
<dbReference type="GO" id="GO:0031071">
    <property type="term" value="F:cysteine desulfurase activity"/>
    <property type="evidence" value="ECO:0007669"/>
    <property type="project" value="UniProtKB-UniRule"/>
</dbReference>
<dbReference type="GO" id="GO:0046872">
    <property type="term" value="F:metal ion binding"/>
    <property type="evidence" value="ECO:0007669"/>
    <property type="project" value="UniProtKB-KW"/>
</dbReference>
<dbReference type="GO" id="GO:0030170">
    <property type="term" value="F:pyridoxal phosphate binding"/>
    <property type="evidence" value="ECO:0007669"/>
    <property type="project" value="UniProtKB-UniRule"/>
</dbReference>
<dbReference type="GO" id="GO:0044571">
    <property type="term" value="P:[2Fe-2S] cluster assembly"/>
    <property type="evidence" value="ECO:0007669"/>
    <property type="project" value="UniProtKB-UniRule"/>
</dbReference>
<dbReference type="GO" id="GO:0006520">
    <property type="term" value="P:amino acid metabolic process"/>
    <property type="evidence" value="ECO:0007669"/>
    <property type="project" value="InterPro"/>
</dbReference>
<dbReference type="FunFam" id="3.40.640.10:FF:000003">
    <property type="entry name" value="Cysteine desulfurase IscS"/>
    <property type="match status" value="1"/>
</dbReference>
<dbReference type="Gene3D" id="1.10.260.50">
    <property type="match status" value="1"/>
</dbReference>
<dbReference type="Gene3D" id="3.90.1150.10">
    <property type="entry name" value="Aspartate Aminotransferase, domain 1"/>
    <property type="match status" value="1"/>
</dbReference>
<dbReference type="Gene3D" id="3.40.640.10">
    <property type="entry name" value="Type I PLP-dependent aspartate aminotransferase-like (Major domain)"/>
    <property type="match status" value="1"/>
</dbReference>
<dbReference type="HAMAP" id="MF_00331">
    <property type="entry name" value="Cys_desulf_IscS"/>
    <property type="match status" value="1"/>
</dbReference>
<dbReference type="InterPro" id="IPR000192">
    <property type="entry name" value="Aminotrans_V_dom"/>
</dbReference>
<dbReference type="InterPro" id="IPR020578">
    <property type="entry name" value="Aminotrans_V_PyrdxlP_BS"/>
</dbReference>
<dbReference type="InterPro" id="IPR010240">
    <property type="entry name" value="Cys_deSase_IscS"/>
</dbReference>
<dbReference type="InterPro" id="IPR017772">
    <property type="entry name" value="Cys_deSase_NifS_bac/arc"/>
</dbReference>
<dbReference type="InterPro" id="IPR016454">
    <property type="entry name" value="Cysteine_dSase"/>
</dbReference>
<dbReference type="InterPro" id="IPR015424">
    <property type="entry name" value="PyrdxlP-dep_Trfase"/>
</dbReference>
<dbReference type="InterPro" id="IPR015421">
    <property type="entry name" value="PyrdxlP-dep_Trfase_major"/>
</dbReference>
<dbReference type="InterPro" id="IPR015422">
    <property type="entry name" value="PyrdxlP-dep_Trfase_small"/>
</dbReference>
<dbReference type="NCBIfam" id="TIGR03402">
    <property type="entry name" value="FeS_nifS"/>
    <property type="match status" value="1"/>
</dbReference>
<dbReference type="NCBIfam" id="NF002806">
    <property type="entry name" value="PRK02948.1"/>
    <property type="match status" value="1"/>
</dbReference>
<dbReference type="PANTHER" id="PTHR11601:SF34">
    <property type="entry name" value="CYSTEINE DESULFURASE"/>
    <property type="match status" value="1"/>
</dbReference>
<dbReference type="PANTHER" id="PTHR11601">
    <property type="entry name" value="CYSTEINE DESULFURYLASE FAMILY MEMBER"/>
    <property type="match status" value="1"/>
</dbReference>
<dbReference type="Pfam" id="PF00266">
    <property type="entry name" value="Aminotran_5"/>
    <property type="match status" value="1"/>
</dbReference>
<dbReference type="PIRSF" id="PIRSF005572">
    <property type="entry name" value="NifS"/>
    <property type="match status" value="1"/>
</dbReference>
<dbReference type="SUPFAM" id="SSF53383">
    <property type="entry name" value="PLP-dependent transferases"/>
    <property type="match status" value="1"/>
</dbReference>
<dbReference type="PROSITE" id="PS00595">
    <property type="entry name" value="AA_TRANSFER_CLASS_5"/>
    <property type="match status" value="1"/>
</dbReference>
<feature type="chain" id="PRO_1000019405" description="Cysteine desulfurase IscS">
    <location>
        <begin position="1"/>
        <end position="397"/>
    </location>
</feature>
<feature type="active site" description="Cysteine persulfide intermediate" evidence="1">
    <location>
        <position position="328"/>
    </location>
</feature>
<feature type="binding site" evidence="1">
    <location>
        <begin position="72"/>
        <end position="73"/>
    </location>
    <ligand>
        <name>pyridoxal 5'-phosphate</name>
        <dbReference type="ChEBI" id="CHEBI:597326"/>
    </ligand>
</feature>
<feature type="binding site" evidence="1">
    <location>
        <position position="152"/>
    </location>
    <ligand>
        <name>pyridoxal 5'-phosphate</name>
        <dbReference type="ChEBI" id="CHEBI:597326"/>
    </ligand>
</feature>
<feature type="binding site" evidence="1">
    <location>
        <position position="180"/>
    </location>
    <ligand>
        <name>pyridoxal 5'-phosphate</name>
        <dbReference type="ChEBI" id="CHEBI:597326"/>
    </ligand>
</feature>
<feature type="binding site" evidence="1">
    <location>
        <begin position="200"/>
        <end position="202"/>
    </location>
    <ligand>
        <name>pyridoxal 5'-phosphate</name>
        <dbReference type="ChEBI" id="CHEBI:597326"/>
    </ligand>
</feature>
<feature type="binding site" evidence="1">
    <location>
        <position position="238"/>
    </location>
    <ligand>
        <name>pyridoxal 5'-phosphate</name>
        <dbReference type="ChEBI" id="CHEBI:597326"/>
    </ligand>
</feature>
<feature type="binding site" description="via persulfide group" evidence="1">
    <location>
        <position position="328"/>
    </location>
    <ligand>
        <name>[2Fe-2S] cluster</name>
        <dbReference type="ChEBI" id="CHEBI:190135"/>
        <note>ligand shared with IscU</note>
    </ligand>
</feature>
<feature type="modified residue" description="N6-(pyridoxal phosphate)lysine" evidence="1">
    <location>
        <position position="203"/>
    </location>
</feature>
<evidence type="ECO:0000255" key="1">
    <source>
        <dbReference type="HAMAP-Rule" id="MF_00331"/>
    </source>
</evidence>
<sequence length="397" mass="44107">MNKQVYMDYSATTYTKPEVLEEMLPFFTENFGNPSSLYSFSDKTKKAVNLARERVSKALNAEKNEIFFTSGGSEADNWAIKGIAYANKKKGNHIITTKIEHHAILHTAQFLEKEGFKVTYLPVDEEGFVSVEDIKNAITDETILVSVMFANNEIGTIEPIKEIGELCKEKNIYFHTDAVQAIGHVDIDVKDMNIDLLSMSAHKFYGPKGVGALYIKNGVKIQNLIHGGGQERGKRASTENTAGIVGLGKAIELAMENMPEENEKLSNLRGRLIRGIEARIPEVKLNGPKDMSRRLPNNVNFSFIGIEGETLLLDLDMNGIFGSTGSACASASLDPSHVLLSIGLPHETAHGSLRLSLGAKNTEEDIDYVLEVLPKIIKQRREMSPLWEDYMKNKEEK</sequence>
<name>ISCS_CLOBH</name>
<gene>
    <name evidence="1" type="primary">iscS</name>
    <name type="ordered locus">CBO2568</name>
    <name type="ordered locus">CLC_2440</name>
</gene>
<proteinExistence type="inferred from homology"/>
<protein>
    <recommendedName>
        <fullName evidence="1">Cysteine desulfurase IscS</fullName>
        <ecNumber evidence="1">2.8.1.7</ecNumber>
    </recommendedName>
</protein>
<organism>
    <name type="scientific">Clostridium botulinum (strain Hall / ATCC 3502 / NCTC 13319 / Type A)</name>
    <dbReference type="NCBI Taxonomy" id="441771"/>
    <lineage>
        <taxon>Bacteria</taxon>
        <taxon>Bacillati</taxon>
        <taxon>Bacillota</taxon>
        <taxon>Clostridia</taxon>
        <taxon>Eubacteriales</taxon>
        <taxon>Clostridiaceae</taxon>
        <taxon>Clostridium</taxon>
    </lineage>
</organism>
<comment type="function">
    <text evidence="1">Master enzyme that delivers sulfur to a number of partners involved in Fe-S cluster assembly, tRNA modification or cofactor biosynthesis. Catalyzes the removal of elemental sulfur atoms from cysteine to produce alanine. Functions as a sulfur delivery protein for Fe-S cluster synthesis onto IscU, an Fe-S scaffold assembly protein, as well as other S acceptor proteins.</text>
</comment>
<comment type="catalytic activity">
    <reaction evidence="1">
        <text>(sulfur carrier)-H + L-cysteine = (sulfur carrier)-SH + L-alanine</text>
        <dbReference type="Rhea" id="RHEA:43892"/>
        <dbReference type="Rhea" id="RHEA-COMP:14737"/>
        <dbReference type="Rhea" id="RHEA-COMP:14739"/>
        <dbReference type="ChEBI" id="CHEBI:29917"/>
        <dbReference type="ChEBI" id="CHEBI:35235"/>
        <dbReference type="ChEBI" id="CHEBI:57972"/>
        <dbReference type="ChEBI" id="CHEBI:64428"/>
        <dbReference type="EC" id="2.8.1.7"/>
    </reaction>
</comment>
<comment type="cofactor">
    <cofactor evidence="1">
        <name>pyridoxal 5'-phosphate</name>
        <dbReference type="ChEBI" id="CHEBI:597326"/>
    </cofactor>
</comment>
<comment type="pathway">
    <text evidence="1">Cofactor biosynthesis; iron-sulfur cluster biosynthesis.</text>
</comment>
<comment type="subunit">
    <text evidence="1">Homodimer. Forms a heterotetramer with IscU, interacts with other sulfur acceptors.</text>
</comment>
<comment type="subcellular location">
    <subcellularLocation>
        <location evidence="1">Cytoplasm</location>
    </subcellularLocation>
</comment>
<comment type="similarity">
    <text evidence="1">Belongs to the class-V pyridoxal-phosphate-dependent aminotransferase family. NifS/IscS subfamily.</text>
</comment>
<accession>A5I4Z9</accession>
<accession>A7G666</accession>
<keyword id="KW-0001">2Fe-2S</keyword>
<keyword id="KW-0963">Cytoplasm</keyword>
<keyword id="KW-0408">Iron</keyword>
<keyword id="KW-0411">Iron-sulfur</keyword>
<keyword id="KW-0479">Metal-binding</keyword>
<keyword id="KW-0663">Pyridoxal phosphate</keyword>
<keyword id="KW-1185">Reference proteome</keyword>
<keyword id="KW-0808">Transferase</keyword>
<reference key="1">
    <citation type="journal article" date="2007" name="Genome Res.">
        <title>Genome sequence of a proteolytic (Group I) Clostridium botulinum strain Hall A and comparative analysis of the clostridial genomes.</title>
        <authorList>
            <person name="Sebaihia M."/>
            <person name="Peck M.W."/>
            <person name="Minton N.P."/>
            <person name="Thomson N.R."/>
            <person name="Holden M.T.G."/>
            <person name="Mitchell W.J."/>
            <person name="Carter A.T."/>
            <person name="Bentley S.D."/>
            <person name="Mason D.R."/>
            <person name="Crossman L."/>
            <person name="Paul C.J."/>
            <person name="Ivens A."/>
            <person name="Wells-Bennik M.H.J."/>
            <person name="Davis I.J."/>
            <person name="Cerdeno-Tarraga A.M."/>
            <person name="Churcher C."/>
            <person name="Quail M.A."/>
            <person name="Chillingworth T."/>
            <person name="Feltwell T."/>
            <person name="Fraser A."/>
            <person name="Goodhead I."/>
            <person name="Hance Z."/>
            <person name="Jagels K."/>
            <person name="Larke N."/>
            <person name="Maddison M."/>
            <person name="Moule S."/>
            <person name="Mungall K."/>
            <person name="Norbertczak H."/>
            <person name="Rabbinowitsch E."/>
            <person name="Sanders M."/>
            <person name="Simmonds M."/>
            <person name="White B."/>
            <person name="Whithead S."/>
            <person name="Parkhill J."/>
        </authorList>
    </citation>
    <scope>NUCLEOTIDE SEQUENCE [LARGE SCALE GENOMIC DNA]</scope>
    <source>
        <strain>Hall / ATCC 3502 / NCTC 13319 / Type A</strain>
    </source>
</reference>
<reference key="2">
    <citation type="journal article" date="2007" name="PLoS ONE">
        <title>Analysis of the neurotoxin complex genes in Clostridium botulinum A1-A4 and B1 strains: BoNT/A3, /Ba4 and /B1 clusters are located within plasmids.</title>
        <authorList>
            <person name="Smith T.J."/>
            <person name="Hill K.K."/>
            <person name="Foley B.T."/>
            <person name="Detter J.C."/>
            <person name="Munk A.C."/>
            <person name="Bruce D.C."/>
            <person name="Doggett N.A."/>
            <person name="Smith L.A."/>
            <person name="Marks J.D."/>
            <person name="Xie G."/>
            <person name="Brettin T.S."/>
        </authorList>
    </citation>
    <scope>NUCLEOTIDE SEQUENCE [LARGE SCALE GENOMIC DNA]</scope>
    <source>
        <strain>Hall / ATCC 3502 / NCTC 13319 / Type A</strain>
    </source>
</reference>